<sequence>MDLKDYVRIFDTTLRDGEQCPGAAMTENEKLEIASQLATMKVDIIEAGFPVSSPVQFQAVERIARETEGPMIAALARAMKADIEAASKALQPAKKRRIHTFIASSPIHMKYKLGKEPKEVLKMAVEAVTLCRQFVDDVEFSPEDATRSEPEFLRELCEAVIAAGATTINIPDTVGYTTPAEYGGLFKFLLSNVRGAEKIIFSAHCHNDLGLATANSLAAVQNGARQIECTINGIGERAGNTAMEEVVMAMRTRKDTFGIQTQIKTEEIARASYLVKTITGMLVQPNKAIVGANAFAHESGIHQDGVIKHRETYEIMKPETVGLSSNRMVLGRHSGRAGFKDRIVKLGFSPQVEELEAAYQRFLEIADRKKEIYDEDIRALFSEEARKSTGDRFQLEGFTVSTGTKSTPTAGVRILIDGHVREESATGDGPVDAIYKAIQKTTGMDPEVSRLVISPVTEGQDAMAEASVTLEYKGDRVVGKGSSTDIIEACSRAYISALNRL</sequence>
<accession>Q72RL9</accession>
<organism>
    <name type="scientific">Leptospira interrogans serogroup Icterohaemorrhagiae serovar copenhageni (strain Fiocruz L1-130)</name>
    <dbReference type="NCBI Taxonomy" id="267671"/>
    <lineage>
        <taxon>Bacteria</taxon>
        <taxon>Pseudomonadati</taxon>
        <taxon>Spirochaetota</taxon>
        <taxon>Spirochaetia</taxon>
        <taxon>Leptospirales</taxon>
        <taxon>Leptospiraceae</taxon>
        <taxon>Leptospira</taxon>
    </lineage>
</organism>
<dbReference type="EC" id="2.3.3.13" evidence="1"/>
<dbReference type="EMBL" id="AE016823">
    <property type="protein sequence ID" value="AAS70315.1"/>
    <property type="status" value="ALT_INIT"/>
    <property type="molecule type" value="Genomic_DNA"/>
</dbReference>
<dbReference type="SMR" id="Q72RL9"/>
<dbReference type="KEGG" id="lic:LIC_11726"/>
<dbReference type="HOGENOM" id="CLU_022158_0_1_12"/>
<dbReference type="UniPathway" id="UPA00048">
    <property type="reaction ID" value="UER00070"/>
</dbReference>
<dbReference type="Proteomes" id="UP000007037">
    <property type="component" value="Chromosome I"/>
</dbReference>
<dbReference type="GO" id="GO:0005737">
    <property type="term" value="C:cytoplasm"/>
    <property type="evidence" value="ECO:0007669"/>
    <property type="project" value="UniProtKB-SubCell"/>
</dbReference>
<dbReference type="GO" id="GO:0003852">
    <property type="term" value="F:2-isopropylmalate synthase activity"/>
    <property type="evidence" value="ECO:0007669"/>
    <property type="project" value="UniProtKB-UniRule"/>
</dbReference>
<dbReference type="GO" id="GO:0003985">
    <property type="term" value="F:acetyl-CoA C-acetyltransferase activity"/>
    <property type="evidence" value="ECO:0007669"/>
    <property type="project" value="UniProtKB-UniRule"/>
</dbReference>
<dbReference type="GO" id="GO:0030145">
    <property type="term" value="F:manganese ion binding"/>
    <property type="evidence" value="ECO:0007669"/>
    <property type="project" value="UniProtKB-UniRule"/>
</dbReference>
<dbReference type="GO" id="GO:0009098">
    <property type="term" value="P:L-leucine biosynthetic process"/>
    <property type="evidence" value="ECO:0007669"/>
    <property type="project" value="UniProtKB-UniRule"/>
</dbReference>
<dbReference type="CDD" id="cd07940">
    <property type="entry name" value="DRE_TIM_IPMS"/>
    <property type="match status" value="1"/>
</dbReference>
<dbReference type="FunFam" id="1.10.238.260:FF:000001">
    <property type="entry name" value="2-isopropylmalate synthase"/>
    <property type="match status" value="1"/>
</dbReference>
<dbReference type="FunFam" id="3.20.20.70:FF:000010">
    <property type="entry name" value="2-isopropylmalate synthase"/>
    <property type="match status" value="1"/>
</dbReference>
<dbReference type="FunFam" id="3.30.160.270:FF:000001">
    <property type="entry name" value="2-isopropylmalate synthase"/>
    <property type="match status" value="1"/>
</dbReference>
<dbReference type="Gene3D" id="1.10.238.260">
    <property type="match status" value="1"/>
</dbReference>
<dbReference type="Gene3D" id="3.30.160.270">
    <property type="match status" value="1"/>
</dbReference>
<dbReference type="Gene3D" id="3.20.20.70">
    <property type="entry name" value="Aldolase class I"/>
    <property type="match status" value="1"/>
</dbReference>
<dbReference type="HAMAP" id="MF_01025">
    <property type="entry name" value="LeuA_type1"/>
    <property type="match status" value="1"/>
</dbReference>
<dbReference type="InterPro" id="IPR050073">
    <property type="entry name" value="2-IPM_HCS-like"/>
</dbReference>
<dbReference type="InterPro" id="IPR013709">
    <property type="entry name" value="2-isopropylmalate_synth_dimer"/>
</dbReference>
<dbReference type="InterPro" id="IPR002034">
    <property type="entry name" value="AIPM/Hcit_synth_CS"/>
</dbReference>
<dbReference type="InterPro" id="IPR013785">
    <property type="entry name" value="Aldolase_TIM"/>
</dbReference>
<dbReference type="InterPro" id="IPR054691">
    <property type="entry name" value="LeuA/HCS_post-cat"/>
</dbReference>
<dbReference type="InterPro" id="IPR036230">
    <property type="entry name" value="LeuA_allosteric_dom_sf"/>
</dbReference>
<dbReference type="InterPro" id="IPR005671">
    <property type="entry name" value="LeuA_bact_synth"/>
</dbReference>
<dbReference type="InterPro" id="IPR000891">
    <property type="entry name" value="PYR_CT"/>
</dbReference>
<dbReference type="NCBIfam" id="TIGR00973">
    <property type="entry name" value="leuA_bact"/>
    <property type="match status" value="1"/>
</dbReference>
<dbReference type="NCBIfam" id="NF002086">
    <property type="entry name" value="PRK00915.1-3"/>
    <property type="match status" value="1"/>
</dbReference>
<dbReference type="NCBIfam" id="NF002087">
    <property type="entry name" value="PRK00915.1-4"/>
    <property type="match status" value="1"/>
</dbReference>
<dbReference type="PANTHER" id="PTHR10277:SF9">
    <property type="entry name" value="2-ISOPROPYLMALATE SYNTHASE 1, CHLOROPLASTIC-RELATED"/>
    <property type="match status" value="1"/>
</dbReference>
<dbReference type="PANTHER" id="PTHR10277">
    <property type="entry name" value="HOMOCITRATE SYNTHASE-RELATED"/>
    <property type="match status" value="1"/>
</dbReference>
<dbReference type="Pfam" id="PF22617">
    <property type="entry name" value="HCS_D2"/>
    <property type="match status" value="1"/>
</dbReference>
<dbReference type="Pfam" id="PF00682">
    <property type="entry name" value="HMGL-like"/>
    <property type="match status" value="1"/>
</dbReference>
<dbReference type="Pfam" id="PF08502">
    <property type="entry name" value="LeuA_dimer"/>
    <property type="match status" value="1"/>
</dbReference>
<dbReference type="SMART" id="SM00917">
    <property type="entry name" value="LeuA_dimer"/>
    <property type="match status" value="1"/>
</dbReference>
<dbReference type="SUPFAM" id="SSF110921">
    <property type="entry name" value="2-isopropylmalate synthase LeuA, allosteric (dimerisation) domain"/>
    <property type="match status" value="1"/>
</dbReference>
<dbReference type="SUPFAM" id="SSF51569">
    <property type="entry name" value="Aldolase"/>
    <property type="match status" value="1"/>
</dbReference>
<dbReference type="PROSITE" id="PS00815">
    <property type="entry name" value="AIPM_HOMOCIT_SYNTH_1"/>
    <property type="match status" value="1"/>
</dbReference>
<dbReference type="PROSITE" id="PS00816">
    <property type="entry name" value="AIPM_HOMOCIT_SYNTH_2"/>
    <property type="match status" value="1"/>
</dbReference>
<dbReference type="PROSITE" id="PS50991">
    <property type="entry name" value="PYR_CT"/>
    <property type="match status" value="1"/>
</dbReference>
<name>LEU1_LEPIC</name>
<proteinExistence type="inferred from homology"/>
<feature type="chain" id="PRO_0000140357" description="2-isopropylmalate synthase">
    <location>
        <begin position="1"/>
        <end position="501"/>
    </location>
</feature>
<feature type="domain" description="Pyruvate carboxyltransferase" evidence="1">
    <location>
        <begin position="7"/>
        <end position="269"/>
    </location>
</feature>
<feature type="region of interest" description="Regulatory domain" evidence="1">
    <location>
        <begin position="394"/>
        <end position="501"/>
    </location>
</feature>
<feature type="binding site" evidence="1">
    <location>
        <position position="16"/>
    </location>
    <ligand>
        <name>Mn(2+)</name>
        <dbReference type="ChEBI" id="CHEBI:29035"/>
    </ligand>
</feature>
<feature type="binding site" evidence="1">
    <location>
        <position position="204"/>
    </location>
    <ligand>
        <name>Mn(2+)</name>
        <dbReference type="ChEBI" id="CHEBI:29035"/>
    </ligand>
</feature>
<feature type="binding site" evidence="1">
    <location>
        <position position="206"/>
    </location>
    <ligand>
        <name>Mn(2+)</name>
        <dbReference type="ChEBI" id="CHEBI:29035"/>
    </ligand>
</feature>
<feature type="binding site" evidence="1">
    <location>
        <position position="240"/>
    </location>
    <ligand>
        <name>Mn(2+)</name>
        <dbReference type="ChEBI" id="CHEBI:29035"/>
    </ligand>
</feature>
<keyword id="KW-0028">Amino-acid biosynthesis</keyword>
<keyword id="KW-0100">Branched-chain amino acid biosynthesis</keyword>
<keyword id="KW-0963">Cytoplasm</keyword>
<keyword id="KW-0432">Leucine biosynthesis</keyword>
<keyword id="KW-0464">Manganese</keyword>
<keyword id="KW-0479">Metal-binding</keyword>
<keyword id="KW-0808">Transferase</keyword>
<protein>
    <recommendedName>
        <fullName evidence="1">2-isopropylmalate synthase</fullName>
        <ecNumber evidence="1">2.3.3.13</ecNumber>
    </recommendedName>
    <alternativeName>
        <fullName evidence="1">Alpha-IPM synthase</fullName>
    </alternativeName>
    <alternativeName>
        <fullName evidence="1">Alpha-isopropylmalate synthase</fullName>
    </alternativeName>
</protein>
<gene>
    <name evidence="1" type="primary">leuA</name>
    <name type="ordered locus">LIC_11726</name>
</gene>
<evidence type="ECO:0000255" key="1">
    <source>
        <dbReference type="HAMAP-Rule" id="MF_01025"/>
    </source>
</evidence>
<evidence type="ECO:0000305" key="2"/>
<comment type="function">
    <text evidence="1">Catalyzes the condensation of the acetyl group of acetyl-CoA with 3-methyl-2-oxobutanoate (2-ketoisovalerate) to form 3-carboxy-3-hydroxy-4-methylpentanoate (2-isopropylmalate).</text>
</comment>
<comment type="catalytic activity">
    <reaction evidence="1">
        <text>3-methyl-2-oxobutanoate + acetyl-CoA + H2O = (2S)-2-isopropylmalate + CoA + H(+)</text>
        <dbReference type="Rhea" id="RHEA:21524"/>
        <dbReference type="ChEBI" id="CHEBI:1178"/>
        <dbReference type="ChEBI" id="CHEBI:11851"/>
        <dbReference type="ChEBI" id="CHEBI:15377"/>
        <dbReference type="ChEBI" id="CHEBI:15378"/>
        <dbReference type="ChEBI" id="CHEBI:57287"/>
        <dbReference type="ChEBI" id="CHEBI:57288"/>
        <dbReference type="EC" id="2.3.3.13"/>
    </reaction>
</comment>
<comment type="cofactor">
    <cofactor evidence="1">
        <name>Mn(2+)</name>
        <dbReference type="ChEBI" id="CHEBI:29035"/>
    </cofactor>
</comment>
<comment type="pathway">
    <text evidence="1">Amino-acid biosynthesis; L-leucine biosynthesis; L-leucine from 3-methyl-2-oxobutanoate: step 1/4.</text>
</comment>
<comment type="subunit">
    <text evidence="1">Homodimer.</text>
</comment>
<comment type="subcellular location">
    <subcellularLocation>
        <location evidence="1">Cytoplasm</location>
    </subcellularLocation>
</comment>
<comment type="similarity">
    <text evidence="1">Belongs to the alpha-IPM synthase/homocitrate synthase family. LeuA type 1 subfamily.</text>
</comment>
<comment type="sequence caution" evidence="2">
    <conflict type="erroneous initiation">
        <sequence resource="EMBL-CDS" id="AAS70315"/>
    </conflict>
    <text>Extended N-terminus.</text>
</comment>
<reference key="1">
    <citation type="journal article" date="2004" name="J. Bacteriol.">
        <title>Comparative genomics of two Leptospira interrogans serovars reveals novel insights into physiology and pathogenesis.</title>
        <authorList>
            <person name="Nascimento A.L.T.O."/>
            <person name="Ko A.I."/>
            <person name="Martins E.A.L."/>
            <person name="Monteiro-Vitorello C.B."/>
            <person name="Ho P.L."/>
            <person name="Haake D.A."/>
            <person name="Verjovski-Almeida S."/>
            <person name="Hartskeerl R.A."/>
            <person name="Marques M.V."/>
            <person name="Oliveira M.C."/>
            <person name="Menck C.F.M."/>
            <person name="Leite L.C.C."/>
            <person name="Carrer H."/>
            <person name="Coutinho L.L."/>
            <person name="Degrave W.M."/>
            <person name="Dellagostin O.A."/>
            <person name="El-Dorry H."/>
            <person name="Ferro E.S."/>
            <person name="Ferro M.I.T."/>
            <person name="Furlan L.R."/>
            <person name="Gamberini M."/>
            <person name="Giglioti E.A."/>
            <person name="Goes-Neto A."/>
            <person name="Goldman G.H."/>
            <person name="Goldman M.H.S."/>
            <person name="Harakava R."/>
            <person name="Jeronimo S.M.B."/>
            <person name="Junqueira-de-Azevedo I.L.M."/>
            <person name="Kimura E.T."/>
            <person name="Kuramae E.E."/>
            <person name="Lemos E.G.M."/>
            <person name="Lemos M.V.F."/>
            <person name="Marino C.L."/>
            <person name="Nunes L.R."/>
            <person name="de Oliveira R.C."/>
            <person name="Pereira G.G."/>
            <person name="Reis M.S."/>
            <person name="Schriefer A."/>
            <person name="Siqueira W.J."/>
            <person name="Sommer P."/>
            <person name="Tsai S.M."/>
            <person name="Simpson A.J.G."/>
            <person name="Ferro J.A."/>
            <person name="Camargo L.E.A."/>
            <person name="Kitajima J.P."/>
            <person name="Setubal J.C."/>
            <person name="Van Sluys M.A."/>
        </authorList>
    </citation>
    <scope>NUCLEOTIDE SEQUENCE [LARGE SCALE GENOMIC DNA]</scope>
    <source>
        <strain>Fiocruz L1-130</strain>
    </source>
</reference>